<feature type="signal peptide" description="Tat-type signal" evidence="1">
    <location>
        <begin position="1"/>
        <end position="31"/>
    </location>
</feature>
<feature type="chain" id="PRO_1000215768" description="Periplasmic nitrate reductase" evidence="1">
    <location>
        <begin position="32"/>
        <end position="829"/>
    </location>
</feature>
<feature type="domain" description="4Fe-4S Mo/W bis-MGD-type" evidence="1">
    <location>
        <begin position="40"/>
        <end position="96"/>
    </location>
</feature>
<feature type="binding site" evidence="1">
    <location>
        <position position="47"/>
    </location>
    <ligand>
        <name>[4Fe-4S] cluster</name>
        <dbReference type="ChEBI" id="CHEBI:49883"/>
    </ligand>
</feature>
<feature type="binding site" evidence="1">
    <location>
        <position position="50"/>
    </location>
    <ligand>
        <name>[4Fe-4S] cluster</name>
        <dbReference type="ChEBI" id="CHEBI:49883"/>
    </ligand>
</feature>
<feature type="binding site" evidence="1">
    <location>
        <position position="54"/>
    </location>
    <ligand>
        <name>[4Fe-4S] cluster</name>
        <dbReference type="ChEBI" id="CHEBI:49883"/>
    </ligand>
</feature>
<feature type="binding site" evidence="1">
    <location>
        <position position="82"/>
    </location>
    <ligand>
        <name>[4Fe-4S] cluster</name>
        <dbReference type="ChEBI" id="CHEBI:49883"/>
    </ligand>
</feature>
<feature type="binding site" evidence="1">
    <location>
        <position position="84"/>
    </location>
    <ligand>
        <name>Mo-bis(molybdopterin guanine dinucleotide)</name>
        <dbReference type="ChEBI" id="CHEBI:60539"/>
    </ligand>
</feature>
<feature type="binding site" evidence="1">
    <location>
        <position position="151"/>
    </location>
    <ligand>
        <name>Mo-bis(molybdopterin guanine dinucleotide)</name>
        <dbReference type="ChEBI" id="CHEBI:60539"/>
    </ligand>
</feature>
<feature type="binding site" evidence="1">
    <location>
        <position position="176"/>
    </location>
    <ligand>
        <name>Mo-bis(molybdopterin guanine dinucleotide)</name>
        <dbReference type="ChEBI" id="CHEBI:60539"/>
    </ligand>
</feature>
<feature type="binding site" evidence="1">
    <location>
        <position position="180"/>
    </location>
    <ligand>
        <name>Mo-bis(molybdopterin guanine dinucleotide)</name>
        <dbReference type="ChEBI" id="CHEBI:60539"/>
    </ligand>
</feature>
<feature type="binding site" evidence="1">
    <location>
        <begin position="213"/>
        <end position="220"/>
    </location>
    <ligand>
        <name>Mo-bis(molybdopterin guanine dinucleotide)</name>
        <dbReference type="ChEBI" id="CHEBI:60539"/>
    </ligand>
</feature>
<feature type="binding site" evidence="1">
    <location>
        <begin position="263"/>
        <end position="265"/>
    </location>
    <ligand>
        <name>Mo-bis(molybdopterin guanine dinucleotide)</name>
        <dbReference type="ChEBI" id="CHEBI:60539"/>
    </ligand>
</feature>
<feature type="binding site" evidence="1">
    <location>
        <position position="373"/>
    </location>
    <ligand>
        <name>Mo-bis(molybdopterin guanine dinucleotide)</name>
        <dbReference type="ChEBI" id="CHEBI:60539"/>
    </ligand>
</feature>
<feature type="binding site" evidence="1">
    <location>
        <position position="377"/>
    </location>
    <ligand>
        <name>Mo-bis(molybdopterin guanine dinucleotide)</name>
        <dbReference type="ChEBI" id="CHEBI:60539"/>
    </ligand>
</feature>
<feature type="binding site" evidence="1">
    <location>
        <position position="483"/>
    </location>
    <ligand>
        <name>Mo-bis(molybdopterin guanine dinucleotide)</name>
        <dbReference type="ChEBI" id="CHEBI:60539"/>
    </ligand>
</feature>
<feature type="binding site" evidence="1">
    <location>
        <begin position="509"/>
        <end position="510"/>
    </location>
    <ligand>
        <name>Mo-bis(molybdopterin guanine dinucleotide)</name>
        <dbReference type="ChEBI" id="CHEBI:60539"/>
    </ligand>
</feature>
<feature type="binding site" evidence="1">
    <location>
        <position position="532"/>
    </location>
    <ligand>
        <name>Mo-bis(molybdopterin guanine dinucleotide)</name>
        <dbReference type="ChEBI" id="CHEBI:60539"/>
    </ligand>
</feature>
<feature type="binding site" evidence="1">
    <location>
        <position position="559"/>
    </location>
    <ligand>
        <name>Mo-bis(molybdopterin guanine dinucleotide)</name>
        <dbReference type="ChEBI" id="CHEBI:60539"/>
    </ligand>
</feature>
<feature type="binding site" evidence="1">
    <location>
        <begin position="719"/>
        <end position="728"/>
    </location>
    <ligand>
        <name>Mo-bis(molybdopterin guanine dinucleotide)</name>
        <dbReference type="ChEBI" id="CHEBI:60539"/>
    </ligand>
</feature>
<feature type="binding site" evidence="1">
    <location>
        <position position="795"/>
    </location>
    <ligand>
        <name>substrate</name>
    </ligand>
</feature>
<feature type="binding site" evidence="1">
    <location>
        <position position="803"/>
    </location>
    <ligand>
        <name>Mo-bis(molybdopterin guanine dinucleotide)</name>
        <dbReference type="ChEBI" id="CHEBI:60539"/>
    </ligand>
</feature>
<feature type="binding site" evidence="1">
    <location>
        <position position="820"/>
    </location>
    <ligand>
        <name>Mo-bis(molybdopterin guanine dinucleotide)</name>
        <dbReference type="ChEBI" id="CHEBI:60539"/>
    </ligand>
</feature>
<dbReference type="EC" id="1.9.6.1" evidence="1"/>
<dbReference type="EMBL" id="CP001600">
    <property type="protein sequence ID" value="ACR68425.1"/>
    <property type="molecule type" value="Genomic_DNA"/>
</dbReference>
<dbReference type="RefSeq" id="WP_015870593.1">
    <property type="nucleotide sequence ID" value="NZ_CP169062.1"/>
</dbReference>
<dbReference type="SMR" id="C5B7B9"/>
<dbReference type="STRING" id="67780.B6E78_16375"/>
<dbReference type="GeneID" id="69538238"/>
<dbReference type="KEGG" id="eic:NT01EI_1217"/>
<dbReference type="PATRIC" id="fig|634503.3.peg.1106"/>
<dbReference type="HOGENOM" id="CLU_000422_13_4_6"/>
<dbReference type="OrthoDB" id="9816402at2"/>
<dbReference type="Proteomes" id="UP000001485">
    <property type="component" value="Chromosome"/>
</dbReference>
<dbReference type="GO" id="GO:0016020">
    <property type="term" value="C:membrane"/>
    <property type="evidence" value="ECO:0007669"/>
    <property type="project" value="TreeGrafter"/>
</dbReference>
<dbReference type="GO" id="GO:0009325">
    <property type="term" value="C:nitrate reductase complex"/>
    <property type="evidence" value="ECO:0007669"/>
    <property type="project" value="TreeGrafter"/>
</dbReference>
<dbReference type="GO" id="GO:0042597">
    <property type="term" value="C:periplasmic space"/>
    <property type="evidence" value="ECO:0007669"/>
    <property type="project" value="UniProtKB-SubCell"/>
</dbReference>
<dbReference type="GO" id="GO:0051539">
    <property type="term" value="F:4 iron, 4 sulfur cluster binding"/>
    <property type="evidence" value="ECO:0007669"/>
    <property type="project" value="UniProtKB-KW"/>
</dbReference>
<dbReference type="GO" id="GO:0009055">
    <property type="term" value="F:electron transfer activity"/>
    <property type="evidence" value="ECO:0007669"/>
    <property type="project" value="UniProtKB-UniRule"/>
</dbReference>
<dbReference type="GO" id="GO:0005506">
    <property type="term" value="F:iron ion binding"/>
    <property type="evidence" value="ECO:0007669"/>
    <property type="project" value="UniProtKB-UniRule"/>
</dbReference>
<dbReference type="GO" id="GO:0030151">
    <property type="term" value="F:molybdenum ion binding"/>
    <property type="evidence" value="ECO:0007669"/>
    <property type="project" value="InterPro"/>
</dbReference>
<dbReference type="GO" id="GO:0043546">
    <property type="term" value="F:molybdopterin cofactor binding"/>
    <property type="evidence" value="ECO:0007669"/>
    <property type="project" value="InterPro"/>
</dbReference>
<dbReference type="GO" id="GO:0050140">
    <property type="term" value="F:nitrate reductase (cytochrome) activity"/>
    <property type="evidence" value="ECO:0007669"/>
    <property type="project" value="UniProtKB-EC"/>
</dbReference>
<dbReference type="GO" id="GO:0045333">
    <property type="term" value="P:cellular respiration"/>
    <property type="evidence" value="ECO:0007669"/>
    <property type="project" value="UniProtKB-ARBA"/>
</dbReference>
<dbReference type="GO" id="GO:0006777">
    <property type="term" value="P:Mo-molybdopterin cofactor biosynthetic process"/>
    <property type="evidence" value="ECO:0007669"/>
    <property type="project" value="UniProtKB-UniRule"/>
</dbReference>
<dbReference type="GO" id="GO:0042128">
    <property type="term" value="P:nitrate assimilation"/>
    <property type="evidence" value="ECO:0007669"/>
    <property type="project" value="UniProtKB-UniRule"/>
</dbReference>
<dbReference type="CDD" id="cd02791">
    <property type="entry name" value="MopB_CT_Nitrate-R-NapA-like"/>
    <property type="match status" value="1"/>
</dbReference>
<dbReference type="CDD" id="cd02754">
    <property type="entry name" value="MopB_Nitrate-R-NapA-like"/>
    <property type="match status" value="1"/>
</dbReference>
<dbReference type="FunFam" id="2.40.40.20:FF:000005">
    <property type="entry name" value="Periplasmic nitrate reductase"/>
    <property type="match status" value="1"/>
</dbReference>
<dbReference type="Gene3D" id="2.40.40.20">
    <property type="match status" value="1"/>
</dbReference>
<dbReference type="Gene3D" id="3.30.200.210">
    <property type="match status" value="1"/>
</dbReference>
<dbReference type="Gene3D" id="3.40.50.740">
    <property type="match status" value="1"/>
</dbReference>
<dbReference type="Gene3D" id="3.40.228.10">
    <property type="entry name" value="Dimethylsulfoxide Reductase, domain 2"/>
    <property type="match status" value="1"/>
</dbReference>
<dbReference type="HAMAP" id="MF_01630">
    <property type="entry name" value="Nitrate_reduct_NapA"/>
    <property type="match status" value="1"/>
</dbReference>
<dbReference type="InterPro" id="IPR009010">
    <property type="entry name" value="Asp_de-COase-like_dom_sf"/>
</dbReference>
<dbReference type="InterPro" id="IPR041957">
    <property type="entry name" value="CT_Nitrate-R-NapA-like"/>
</dbReference>
<dbReference type="InterPro" id="IPR006657">
    <property type="entry name" value="MoPterin_dinucl-bd_dom"/>
</dbReference>
<dbReference type="InterPro" id="IPR006656">
    <property type="entry name" value="Mopterin_OxRdtase"/>
</dbReference>
<dbReference type="InterPro" id="IPR006963">
    <property type="entry name" value="Mopterin_OxRdtase_4Fe-4S_dom"/>
</dbReference>
<dbReference type="InterPro" id="IPR027467">
    <property type="entry name" value="MopterinOxRdtase_cofactor_BS"/>
</dbReference>
<dbReference type="InterPro" id="IPR010051">
    <property type="entry name" value="Periplasm_NO3_reductase_lsu"/>
</dbReference>
<dbReference type="InterPro" id="IPR050123">
    <property type="entry name" value="Prok_molybdopt-oxidoreductase"/>
</dbReference>
<dbReference type="InterPro" id="IPR006311">
    <property type="entry name" value="TAT_signal"/>
</dbReference>
<dbReference type="InterPro" id="IPR019546">
    <property type="entry name" value="TAT_signal_bac_arc"/>
</dbReference>
<dbReference type="NCBIfam" id="TIGR01706">
    <property type="entry name" value="NAPA"/>
    <property type="match status" value="1"/>
</dbReference>
<dbReference type="NCBIfam" id="NF010055">
    <property type="entry name" value="PRK13532.1"/>
    <property type="match status" value="1"/>
</dbReference>
<dbReference type="NCBIfam" id="TIGR01409">
    <property type="entry name" value="TAT_signal_seq"/>
    <property type="match status" value="1"/>
</dbReference>
<dbReference type="PANTHER" id="PTHR43105:SF11">
    <property type="entry name" value="PERIPLASMIC NITRATE REDUCTASE"/>
    <property type="match status" value="1"/>
</dbReference>
<dbReference type="PANTHER" id="PTHR43105">
    <property type="entry name" value="RESPIRATORY NITRATE REDUCTASE"/>
    <property type="match status" value="1"/>
</dbReference>
<dbReference type="Pfam" id="PF04879">
    <property type="entry name" value="Molybdop_Fe4S4"/>
    <property type="match status" value="1"/>
</dbReference>
<dbReference type="Pfam" id="PF00384">
    <property type="entry name" value="Molybdopterin"/>
    <property type="match status" value="1"/>
</dbReference>
<dbReference type="Pfam" id="PF01568">
    <property type="entry name" value="Molydop_binding"/>
    <property type="match status" value="1"/>
</dbReference>
<dbReference type="Pfam" id="PF10518">
    <property type="entry name" value="TAT_signal"/>
    <property type="match status" value="1"/>
</dbReference>
<dbReference type="SMART" id="SM00926">
    <property type="entry name" value="Molybdop_Fe4S4"/>
    <property type="match status" value="1"/>
</dbReference>
<dbReference type="SUPFAM" id="SSF50692">
    <property type="entry name" value="ADC-like"/>
    <property type="match status" value="1"/>
</dbReference>
<dbReference type="SUPFAM" id="SSF53706">
    <property type="entry name" value="Formate dehydrogenase/DMSO reductase, domains 1-3"/>
    <property type="match status" value="1"/>
</dbReference>
<dbReference type="PROSITE" id="PS51669">
    <property type="entry name" value="4FE4S_MOW_BIS_MGD"/>
    <property type="match status" value="1"/>
</dbReference>
<dbReference type="PROSITE" id="PS00551">
    <property type="entry name" value="MOLYBDOPTERIN_PROK_1"/>
    <property type="match status" value="1"/>
</dbReference>
<dbReference type="PROSITE" id="PS51318">
    <property type="entry name" value="TAT"/>
    <property type="match status" value="1"/>
</dbReference>
<proteinExistence type="inferred from homology"/>
<comment type="function">
    <text evidence="1">Catalytic subunit of the periplasmic nitrate reductase complex NapAB. Receives electrons from NapB and catalyzes the reduction of nitrate to nitrite.</text>
</comment>
<comment type="catalytic activity">
    <reaction evidence="1">
        <text>2 Fe(II)-[cytochrome] + nitrate + 2 H(+) = 2 Fe(III)-[cytochrome] + nitrite + H2O</text>
        <dbReference type="Rhea" id="RHEA:12909"/>
        <dbReference type="Rhea" id="RHEA-COMP:11777"/>
        <dbReference type="Rhea" id="RHEA-COMP:11778"/>
        <dbReference type="ChEBI" id="CHEBI:15377"/>
        <dbReference type="ChEBI" id="CHEBI:15378"/>
        <dbReference type="ChEBI" id="CHEBI:16301"/>
        <dbReference type="ChEBI" id="CHEBI:17632"/>
        <dbReference type="ChEBI" id="CHEBI:29033"/>
        <dbReference type="ChEBI" id="CHEBI:29034"/>
        <dbReference type="EC" id="1.9.6.1"/>
    </reaction>
</comment>
<comment type="cofactor">
    <cofactor evidence="1">
        <name>[4Fe-4S] cluster</name>
        <dbReference type="ChEBI" id="CHEBI:49883"/>
    </cofactor>
    <text evidence="1">Binds 1 [4Fe-4S] cluster.</text>
</comment>
<comment type="cofactor">
    <cofactor evidence="1">
        <name>Mo-bis(molybdopterin guanine dinucleotide)</name>
        <dbReference type="ChEBI" id="CHEBI:60539"/>
    </cofactor>
    <text evidence="1">Binds 1 molybdenum-bis(molybdopterin guanine dinucleotide) (Mo-bis-MGD) cofactor per subunit.</text>
</comment>
<comment type="subunit">
    <text evidence="1">Component of the periplasmic nitrate reductase NapAB complex composed of NapA and NapB.</text>
</comment>
<comment type="subcellular location">
    <subcellularLocation>
        <location evidence="1">Periplasm</location>
    </subcellularLocation>
</comment>
<comment type="PTM">
    <text evidence="1">Predicted to be exported by the Tat system. The position of the signal peptide cleavage has not been experimentally proven.</text>
</comment>
<comment type="similarity">
    <text evidence="1">Belongs to the prokaryotic molybdopterin-containing oxidoreductase family. NasA/NapA/NarB subfamily.</text>
</comment>
<name>NAPA_EDWI9</name>
<evidence type="ECO:0000255" key="1">
    <source>
        <dbReference type="HAMAP-Rule" id="MF_01630"/>
    </source>
</evidence>
<reference key="1">
    <citation type="submission" date="2009-03" db="EMBL/GenBank/DDBJ databases">
        <title>Complete genome sequence of Edwardsiella ictaluri 93-146.</title>
        <authorList>
            <person name="Williams M.L."/>
            <person name="Gillaspy A.F."/>
            <person name="Dyer D.W."/>
            <person name="Thune R.L."/>
            <person name="Waldbieser G.C."/>
            <person name="Schuster S.C."/>
            <person name="Gipson J."/>
            <person name="Zaitshik J."/>
            <person name="Landry C."/>
            <person name="Lawrence M.L."/>
        </authorList>
    </citation>
    <scope>NUCLEOTIDE SEQUENCE [LARGE SCALE GENOMIC DNA]</scope>
    <source>
        <strain>93-146</strain>
    </source>
</reference>
<organism>
    <name type="scientific">Edwardsiella ictaluri (strain 93-146)</name>
    <dbReference type="NCBI Taxonomy" id="634503"/>
    <lineage>
        <taxon>Bacteria</taxon>
        <taxon>Pseudomonadati</taxon>
        <taxon>Pseudomonadota</taxon>
        <taxon>Gammaproteobacteria</taxon>
        <taxon>Enterobacterales</taxon>
        <taxon>Hafniaceae</taxon>
        <taxon>Edwardsiella</taxon>
    </lineage>
</organism>
<gene>
    <name evidence="1" type="primary">napA</name>
    <name type="ordered locus">NT01EI_1217</name>
</gene>
<accession>C5B7B9</accession>
<sequence length="829" mass="92241">MKLSRRDFMKANAVAAAAAAAGLTIPTVARAVTDAGSDGITWDKAPCRFCGTGCGVLVGTQNGRIVASQGDPDAPVNRGLNCIKGYFLPKIMYGKDRLTQPLLRMKGGQYDKEGEFTPVSWDQAFDVMAAKFKGTLKEKGPGAVGMFGSGQWTVWEGYAAAKLFKAGFRSNNLDPNARHCMASAVVGFMRTFGMDEPMGCYDDIEQADAFVLWGSNMAEMHPILWSRITNRRLSNDKVQVAVLSTFEQRSFELADNPIIFTPQSDLVILNYIANYIIQNNAVDQAFMDKHVNIRKGATDIGYGLRPTDPLEKAAKNPGSDASEPMSFDDYKAFVADYTLEKTAKMTGVPQDQLLALAKLYADPNIKVVSYWTMGFNQHTRGVWANNLCYNIHLLTGKISKPGCGPFSLTGQPSACGTAREVGTFAHRLPADMVVTNEKHRQIAETRWKIPAGTIPDKVGLHAVAQDRALKDGKLNAYWVMCNNNMQAGPNINADRMPGWRDPRNFIVVSDPYPTVSALSADLILPTAMWVEKEGAYGNAERRTQFWHQQVKAPGEAKSDLWQLMEFSKRFTVDEVWPAALLAKMPALQGKTLYEVLYVNGNVDRYPLDEVPADRLNDEARACGFYVQKGLFEEYAGFGRGHGHDLAPFDAYHKARGIRWPVVDGKETLWRYREGYDPFVKNGEEVRFYGKPDGKAVIFALPYEPPAESPDQEYDLWLSTGRVLEHWHTGSMTRRVPELHRAFPEAVLFIHPLDAKARGLRRGDKVKVMSRRGELVSIVETRGRNRVPQGLVYMPFFDAAQLVNVLTLDATDPLSKEADFKKCAVKIEKV</sequence>
<protein>
    <recommendedName>
        <fullName evidence="1">Periplasmic nitrate reductase</fullName>
        <ecNumber evidence="1">1.9.6.1</ecNumber>
    </recommendedName>
</protein>
<keyword id="KW-0004">4Fe-4S</keyword>
<keyword id="KW-0249">Electron transport</keyword>
<keyword id="KW-0408">Iron</keyword>
<keyword id="KW-0411">Iron-sulfur</keyword>
<keyword id="KW-0479">Metal-binding</keyword>
<keyword id="KW-0500">Molybdenum</keyword>
<keyword id="KW-0534">Nitrate assimilation</keyword>
<keyword id="KW-0560">Oxidoreductase</keyword>
<keyword id="KW-0574">Periplasm</keyword>
<keyword id="KW-0732">Signal</keyword>
<keyword id="KW-0813">Transport</keyword>